<accession>Q8R7W7</accession>
<comment type="function">
    <text evidence="1">Binds 16S rRNA, required for the assembly of 30S particles and may also be responsible for determining the conformation of the 16S rRNA at the A site.</text>
</comment>
<comment type="cofactor">
    <cofactor evidence="1">
        <name>Zn(2+)</name>
        <dbReference type="ChEBI" id="CHEBI:29105"/>
    </cofactor>
    <text evidence="1">Binds 1 zinc ion per subunit.</text>
</comment>
<comment type="subunit">
    <text evidence="1">Part of the 30S ribosomal subunit. Contacts proteins S3 and S10.</text>
</comment>
<comment type="similarity">
    <text evidence="1">Belongs to the universal ribosomal protein uS14 family. Zinc-binding uS14 subfamily.</text>
</comment>
<sequence>MARKALIVKQQKPQKYKTREYNRCKICGRPRAYLRKFGMCRLCFRKYAHQGMIPGVKKASW</sequence>
<proteinExistence type="inferred from homology"/>
<protein>
    <recommendedName>
        <fullName evidence="1">Small ribosomal subunit protein uS14</fullName>
    </recommendedName>
    <alternativeName>
        <fullName evidence="2">30S ribosomal protein S14 type Z</fullName>
    </alternativeName>
</protein>
<evidence type="ECO:0000255" key="1">
    <source>
        <dbReference type="HAMAP-Rule" id="MF_01364"/>
    </source>
</evidence>
<evidence type="ECO:0000305" key="2"/>
<gene>
    <name evidence="1" type="primary">rpsZ</name>
    <name evidence="1" type="synonym">rpsN</name>
    <name type="ordered locus">TTE2278</name>
</gene>
<dbReference type="EMBL" id="AE008691">
    <property type="protein sequence ID" value="AAM25422.1"/>
    <property type="molecule type" value="Genomic_DNA"/>
</dbReference>
<dbReference type="RefSeq" id="WP_011026325.1">
    <property type="nucleotide sequence ID" value="NZ_JANUCV010000001.1"/>
</dbReference>
<dbReference type="SMR" id="Q8R7W7"/>
<dbReference type="STRING" id="273068.TTE2278"/>
<dbReference type="KEGG" id="tte:TTE2278"/>
<dbReference type="eggNOG" id="COG0199">
    <property type="taxonomic scope" value="Bacteria"/>
</dbReference>
<dbReference type="HOGENOM" id="CLU_139869_3_0_9"/>
<dbReference type="OrthoDB" id="9810484at2"/>
<dbReference type="Proteomes" id="UP000000555">
    <property type="component" value="Chromosome"/>
</dbReference>
<dbReference type="GO" id="GO:0005737">
    <property type="term" value="C:cytoplasm"/>
    <property type="evidence" value="ECO:0007669"/>
    <property type="project" value="UniProtKB-ARBA"/>
</dbReference>
<dbReference type="GO" id="GO:0015935">
    <property type="term" value="C:small ribosomal subunit"/>
    <property type="evidence" value="ECO:0007669"/>
    <property type="project" value="TreeGrafter"/>
</dbReference>
<dbReference type="GO" id="GO:0019843">
    <property type="term" value="F:rRNA binding"/>
    <property type="evidence" value="ECO:0007669"/>
    <property type="project" value="UniProtKB-UniRule"/>
</dbReference>
<dbReference type="GO" id="GO:0003735">
    <property type="term" value="F:structural constituent of ribosome"/>
    <property type="evidence" value="ECO:0007669"/>
    <property type="project" value="InterPro"/>
</dbReference>
<dbReference type="GO" id="GO:0008270">
    <property type="term" value="F:zinc ion binding"/>
    <property type="evidence" value="ECO:0007669"/>
    <property type="project" value="UniProtKB-UniRule"/>
</dbReference>
<dbReference type="GO" id="GO:0006412">
    <property type="term" value="P:translation"/>
    <property type="evidence" value="ECO:0007669"/>
    <property type="project" value="UniProtKB-UniRule"/>
</dbReference>
<dbReference type="FunFam" id="4.10.830.10:FF:000001">
    <property type="entry name" value="30S ribosomal protein S14 type Z"/>
    <property type="match status" value="1"/>
</dbReference>
<dbReference type="Gene3D" id="4.10.830.10">
    <property type="entry name" value="30s Ribosomal Protein S14, Chain N"/>
    <property type="match status" value="1"/>
</dbReference>
<dbReference type="HAMAP" id="MF_01364_B">
    <property type="entry name" value="Ribosomal_uS14_2_B"/>
    <property type="match status" value="1"/>
</dbReference>
<dbReference type="InterPro" id="IPR001209">
    <property type="entry name" value="Ribosomal_uS14"/>
</dbReference>
<dbReference type="InterPro" id="IPR023053">
    <property type="entry name" value="Ribosomal_uS14_bact"/>
</dbReference>
<dbReference type="InterPro" id="IPR018271">
    <property type="entry name" value="Ribosomal_uS14_CS"/>
</dbReference>
<dbReference type="InterPro" id="IPR043140">
    <property type="entry name" value="Ribosomal_uS14_sf"/>
</dbReference>
<dbReference type="NCBIfam" id="NF005974">
    <property type="entry name" value="PRK08061.1"/>
    <property type="match status" value="1"/>
</dbReference>
<dbReference type="PANTHER" id="PTHR19836">
    <property type="entry name" value="30S RIBOSOMAL PROTEIN S14"/>
    <property type="match status" value="1"/>
</dbReference>
<dbReference type="PANTHER" id="PTHR19836:SF19">
    <property type="entry name" value="SMALL RIBOSOMAL SUBUNIT PROTEIN US14M"/>
    <property type="match status" value="1"/>
</dbReference>
<dbReference type="Pfam" id="PF00253">
    <property type="entry name" value="Ribosomal_S14"/>
    <property type="match status" value="1"/>
</dbReference>
<dbReference type="SUPFAM" id="SSF57716">
    <property type="entry name" value="Glucocorticoid receptor-like (DNA-binding domain)"/>
    <property type="match status" value="1"/>
</dbReference>
<dbReference type="PROSITE" id="PS00527">
    <property type="entry name" value="RIBOSOMAL_S14"/>
    <property type="match status" value="1"/>
</dbReference>
<organism>
    <name type="scientific">Caldanaerobacter subterraneus subsp. tengcongensis (strain DSM 15242 / JCM 11007 / NBRC 100824 / MB4)</name>
    <name type="common">Thermoanaerobacter tengcongensis</name>
    <dbReference type="NCBI Taxonomy" id="273068"/>
    <lineage>
        <taxon>Bacteria</taxon>
        <taxon>Bacillati</taxon>
        <taxon>Bacillota</taxon>
        <taxon>Clostridia</taxon>
        <taxon>Thermoanaerobacterales</taxon>
        <taxon>Thermoanaerobacteraceae</taxon>
        <taxon>Caldanaerobacter</taxon>
    </lineage>
</organism>
<name>RS14Z_CALS4</name>
<feature type="chain" id="PRO_0000269153" description="Small ribosomal subunit protein uS14">
    <location>
        <begin position="1"/>
        <end position="61"/>
    </location>
</feature>
<feature type="binding site" evidence="1">
    <location>
        <position position="24"/>
    </location>
    <ligand>
        <name>Zn(2+)</name>
        <dbReference type="ChEBI" id="CHEBI:29105"/>
    </ligand>
</feature>
<feature type="binding site" evidence="1">
    <location>
        <position position="27"/>
    </location>
    <ligand>
        <name>Zn(2+)</name>
        <dbReference type="ChEBI" id="CHEBI:29105"/>
    </ligand>
</feature>
<feature type="binding site" evidence="1">
    <location>
        <position position="40"/>
    </location>
    <ligand>
        <name>Zn(2+)</name>
        <dbReference type="ChEBI" id="CHEBI:29105"/>
    </ligand>
</feature>
<feature type="binding site" evidence="1">
    <location>
        <position position="43"/>
    </location>
    <ligand>
        <name>Zn(2+)</name>
        <dbReference type="ChEBI" id="CHEBI:29105"/>
    </ligand>
</feature>
<reference key="1">
    <citation type="journal article" date="2002" name="Genome Res.">
        <title>A complete sequence of the T. tengcongensis genome.</title>
        <authorList>
            <person name="Bao Q."/>
            <person name="Tian Y."/>
            <person name="Li W."/>
            <person name="Xu Z."/>
            <person name="Xuan Z."/>
            <person name="Hu S."/>
            <person name="Dong W."/>
            <person name="Yang J."/>
            <person name="Chen Y."/>
            <person name="Xue Y."/>
            <person name="Xu Y."/>
            <person name="Lai X."/>
            <person name="Huang L."/>
            <person name="Dong X."/>
            <person name="Ma Y."/>
            <person name="Ling L."/>
            <person name="Tan H."/>
            <person name="Chen R."/>
            <person name="Wang J."/>
            <person name="Yu J."/>
            <person name="Yang H."/>
        </authorList>
    </citation>
    <scope>NUCLEOTIDE SEQUENCE [LARGE SCALE GENOMIC DNA]</scope>
    <source>
        <strain>DSM 15242 / JCM 11007 / NBRC 100824 / MB4</strain>
    </source>
</reference>
<keyword id="KW-0479">Metal-binding</keyword>
<keyword id="KW-1185">Reference proteome</keyword>
<keyword id="KW-0687">Ribonucleoprotein</keyword>
<keyword id="KW-0689">Ribosomal protein</keyword>
<keyword id="KW-0694">RNA-binding</keyword>
<keyword id="KW-0699">rRNA-binding</keyword>
<keyword id="KW-0862">Zinc</keyword>